<keyword id="KW-0967">Endosome</keyword>
<keyword id="KW-0333">Golgi apparatus</keyword>
<keyword id="KW-0472">Membrane</keyword>
<keyword id="KW-0597">Phosphoprotein</keyword>
<keyword id="KW-0653">Protein transport</keyword>
<keyword id="KW-1267">Proteomics identification</keyword>
<keyword id="KW-1185">Reference proteome</keyword>
<keyword id="KW-0812">Transmembrane</keyword>
<keyword id="KW-1133">Transmembrane helix</keyword>
<keyword id="KW-0813">Transport</keyword>
<protein>
    <recommendedName>
        <fullName>Secretory carrier-associated membrane protein 2</fullName>
        <shortName>Secretory carrier membrane protein 2</shortName>
    </recommendedName>
</protein>
<name>SCAM2_HUMAN</name>
<dbReference type="EMBL" id="AF005038">
    <property type="protein sequence ID" value="AAB62723.2"/>
    <property type="molecule type" value="mRNA"/>
</dbReference>
<dbReference type="EMBL" id="AK315516">
    <property type="protein sequence ID" value="BAG37897.1"/>
    <property type="molecule type" value="mRNA"/>
</dbReference>
<dbReference type="EMBL" id="CH471136">
    <property type="protein sequence ID" value="EAW99300.1"/>
    <property type="molecule type" value="Genomic_DNA"/>
</dbReference>
<dbReference type="EMBL" id="BC001376">
    <property type="protein sequence ID" value="AAH01376.1"/>
    <property type="molecule type" value="mRNA"/>
</dbReference>
<dbReference type="EMBL" id="BC004385">
    <property type="protein sequence ID" value="AAH04385.1"/>
    <property type="molecule type" value="mRNA"/>
</dbReference>
<dbReference type="CCDS" id="CCDS10271.1"/>
<dbReference type="RefSeq" id="NP_005688.2">
    <property type="nucleotide sequence ID" value="NM_005697.4"/>
</dbReference>
<dbReference type="BioGRID" id="115377">
    <property type="interactions" value="156"/>
</dbReference>
<dbReference type="CORUM" id="O15127"/>
<dbReference type="FunCoup" id="O15127">
    <property type="interactions" value="1633"/>
</dbReference>
<dbReference type="IntAct" id="O15127">
    <property type="interactions" value="99"/>
</dbReference>
<dbReference type="MINT" id="O15127"/>
<dbReference type="STRING" id="9606.ENSP00000268099"/>
<dbReference type="TCDB" id="8.A.103.1.2">
    <property type="family name" value="the secretory carrier-associated membrane protein (scamp) family"/>
</dbReference>
<dbReference type="GlyGen" id="O15127">
    <property type="glycosylation" value="2 sites, 1 O-linked glycan (1 site)"/>
</dbReference>
<dbReference type="iPTMnet" id="O15127"/>
<dbReference type="PhosphoSitePlus" id="O15127"/>
<dbReference type="SwissPalm" id="O15127"/>
<dbReference type="BioMuta" id="SCAMP2"/>
<dbReference type="jPOST" id="O15127"/>
<dbReference type="MassIVE" id="O15127"/>
<dbReference type="PaxDb" id="9606-ENSP00000268099"/>
<dbReference type="PeptideAtlas" id="O15127"/>
<dbReference type="ProteomicsDB" id="48465"/>
<dbReference type="Pumba" id="O15127"/>
<dbReference type="Antibodypedia" id="14704">
    <property type="antibodies" value="293 antibodies from 26 providers"/>
</dbReference>
<dbReference type="DNASU" id="10066"/>
<dbReference type="Ensembl" id="ENST00000268099.13">
    <property type="protein sequence ID" value="ENSP00000268099.9"/>
    <property type="gene ID" value="ENSG00000140497.16"/>
</dbReference>
<dbReference type="GeneID" id="10066"/>
<dbReference type="KEGG" id="hsa:10066"/>
<dbReference type="MANE-Select" id="ENST00000268099.13">
    <property type="protein sequence ID" value="ENSP00000268099.9"/>
    <property type="RefSeq nucleotide sequence ID" value="NM_005697.5"/>
    <property type="RefSeq protein sequence ID" value="NP_005688.2"/>
</dbReference>
<dbReference type="UCSC" id="uc002azb.2">
    <property type="organism name" value="human"/>
</dbReference>
<dbReference type="AGR" id="HGNC:10564"/>
<dbReference type="CTD" id="10066"/>
<dbReference type="DisGeNET" id="10066"/>
<dbReference type="GeneCards" id="SCAMP2"/>
<dbReference type="HGNC" id="HGNC:10564">
    <property type="gene designation" value="SCAMP2"/>
</dbReference>
<dbReference type="HPA" id="ENSG00000140497">
    <property type="expression patterns" value="Low tissue specificity"/>
</dbReference>
<dbReference type="MIM" id="606912">
    <property type="type" value="gene"/>
</dbReference>
<dbReference type="neXtProt" id="NX_O15127"/>
<dbReference type="OpenTargets" id="ENSG00000140497"/>
<dbReference type="PharmGKB" id="PA34977"/>
<dbReference type="VEuPathDB" id="HostDB:ENSG00000140497"/>
<dbReference type="eggNOG" id="KOG3088">
    <property type="taxonomic scope" value="Eukaryota"/>
</dbReference>
<dbReference type="GeneTree" id="ENSGT00940000156476"/>
<dbReference type="HOGENOM" id="CLU_066546_0_0_1"/>
<dbReference type="InParanoid" id="O15127"/>
<dbReference type="OMA" id="CLAWFTG"/>
<dbReference type="OrthoDB" id="242866at2759"/>
<dbReference type="PAN-GO" id="O15127">
    <property type="GO annotations" value="3 GO annotations based on evolutionary models"/>
</dbReference>
<dbReference type="PhylomeDB" id="O15127"/>
<dbReference type="TreeFam" id="TF313797"/>
<dbReference type="PathwayCommons" id="O15127"/>
<dbReference type="SignaLink" id="O15127"/>
<dbReference type="BioGRID-ORCS" id="10066">
    <property type="hits" value="11 hits in 1157 CRISPR screens"/>
</dbReference>
<dbReference type="ChiTaRS" id="SCAMP2">
    <property type="organism name" value="human"/>
</dbReference>
<dbReference type="GeneWiki" id="SCAMP2"/>
<dbReference type="GenomeRNAi" id="10066"/>
<dbReference type="Pharos" id="O15127">
    <property type="development level" value="Tbio"/>
</dbReference>
<dbReference type="PRO" id="PR:O15127"/>
<dbReference type="Proteomes" id="UP000005640">
    <property type="component" value="Chromosome 15"/>
</dbReference>
<dbReference type="RNAct" id="O15127">
    <property type="molecule type" value="protein"/>
</dbReference>
<dbReference type="Bgee" id="ENSG00000140497">
    <property type="expression patterns" value="Expressed in rectum and 202 other cell types or tissues"/>
</dbReference>
<dbReference type="ExpressionAtlas" id="O15127">
    <property type="expression patterns" value="baseline and differential"/>
</dbReference>
<dbReference type="GO" id="GO:0070062">
    <property type="term" value="C:extracellular exosome"/>
    <property type="evidence" value="ECO:0007005"/>
    <property type="project" value="UniProtKB"/>
</dbReference>
<dbReference type="GO" id="GO:0005794">
    <property type="term" value="C:Golgi apparatus"/>
    <property type="evidence" value="ECO:0000314"/>
    <property type="project" value="HPA"/>
</dbReference>
<dbReference type="GO" id="GO:0043231">
    <property type="term" value="C:intracellular membrane-bounded organelle"/>
    <property type="evidence" value="ECO:0000314"/>
    <property type="project" value="HPA"/>
</dbReference>
<dbReference type="GO" id="GO:0016020">
    <property type="term" value="C:membrane"/>
    <property type="evidence" value="ECO:0000314"/>
    <property type="project" value="UniProtKB"/>
</dbReference>
<dbReference type="GO" id="GO:0055038">
    <property type="term" value="C:recycling endosome membrane"/>
    <property type="evidence" value="ECO:0000314"/>
    <property type="project" value="UniProtKB"/>
</dbReference>
<dbReference type="GO" id="GO:0032588">
    <property type="term" value="C:trans-Golgi network membrane"/>
    <property type="evidence" value="ECO:0000314"/>
    <property type="project" value="UniProtKB"/>
</dbReference>
<dbReference type="GO" id="GO:0006892">
    <property type="term" value="P:post-Golgi vesicle-mediated transport"/>
    <property type="evidence" value="ECO:0000304"/>
    <property type="project" value="ProtInc"/>
</dbReference>
<dbReference type="GO" id="GO:0015031">
    <property type="term" value="P:protein transport"/>
    <property type="evidence" value="ECO:0000314"/>
    <property type="project" value="UniProtKB"/>
</dbReference>
<dbReference type="InterPro" id="IPR007273">
    <property type="entry name" value="SCAMP"/>
</dbReference>
<dbReference type="PANTHER" id="PTHR10687:SF7">
    <property type="entry name" value="SECRETORY CARRIER-ASSOCIATED MEMBRANE PROTEIN 2"/>
    <property type="match status" value="1"/>
</dbReference>
<dbReference type="PANTHER" id="PTHR10687">
    <property type="entry name" value="SECRETORY CARRIER-ASSOCIATED MEMBRANE PROTEIN SCAMP"/>
    <property type="match status" value="1"/>
</dbReference>
<dbReference type="Pfam" id="PF04144">
    <property type="entry name" value="SCAMP"/>
    <property type="match status" value="1"/>
</dbReference>
<evidence type="ECO:0000255" key="1"/>
<evidence type="ECO:0000256" key="2">
    <source>
        <dbReference type="SAM" id="MobiDB-lite"/>
    </source>
</evidence>
<evidence type="ECO:0000269" key="3">
    <source>
    </source>
</evidence>
<evidence type="ECO:0000269" key="4">
    <source>
    </source>
</evidence>
<evidence type="ECO:0000269" key="5">
    <source>
    </source>
</evidence>
<evidence type="ECO:0000305" key="6"/>
<evidence type="ECO:0007744" key="7">
    <source>
    </source>
</evidence>
<evidence type="ECO:0007744" key="8">
    <source>
    </source>
</evidence>
<evidence type="ECO:0007744" key="9">
    <source>
    </source>
</evidence>
<reference key="1">
    <citation type="journal article" date="1997" name="J. Cell Sci.">
        <title>Three mammalian SCAMPs (secretory carrier membrane proteins) are highly related products of distinct genes having similar subcellular distributions.</title>
        <authorList>
            <person name="Singleton D.R."/>
            <person name="Wu T.T."/>
            <person name="Castle J.D."/>
        </authorList>
    </citation>
    <scope>NUCLEOTIDE SEQUENCE [MRNA]</scope>
</reference>
<reference key="2">
    <citation type="submission" date="1999-06" db="EMBL/GenBank/DDBJ databases">
        <authorList>
            <person name="Singleton D.R."/>
            <person name="Wu T.T."/>
            <person name="Castle J.D."/>
        </authorList>
    </citation>
    <scope>SEQUENCE REVISION</scope>
</reference>
<reference key="3">
    <citation type="journal article" date="2004" name="Nat. Genet.">
        <title>Complete sequencing and characterization of 21,243 full-length human cDNAs.</title>
        <authorList>
            <person name="Ota T."/>
            <person name="Suzuki Y."/>
            <person name="Nishikawa T."/>
            <person name="Otsuki T."/>
            <person name="Sugiyama T."/>
            <person name="Irie R."/>
            <person name="Wakamatsu A."/>
            <person name="Hayashi K."/>
            <person name="Sato H."/>
            <person name="Nagai K."/>
            <person name="Kimura K."/>
            <person name="Makita H."/>
            <person name="Sekine M."/>
            <person name="Obayashi M."/>
            <person name="Nishi T."/>
            <person name="Shibahara T."/>
            <person name="Tanaka T."/>
            <person name="Ishii S."/>
            <person name="Yamamoto J."/>
            <person name="Saito K."/>
            <person name="Kawai Y."/>
            <person name="Isono Y."/>
            <person name="Nakamura Y."/>
            <person name="Nagahari K."/>
            <person name="Murakami K."/>
            <person name="Yasuda T."/>
            <person name="Iwayanagi T."/>
            <person name="Wagatsuma M."/>
            <person name="Shiratori A."/>
            <person name="Sudo H."/>
            <person name="Hosoiri T."/>
            <person name="Kaku Y."/>
            <person name="Kodaira H."/>
            <person name="Kondo H."/>
            <person name="Sugawara M."/>
            <person name="Takahashi M."/>
            <person name="Kanda K."/>
            <person name="Yokoi T."/>
            <person name="Furuya T."/>
            <person name="Kikkawa E."/>
            <person name="Omura Y."/>
            <person name="Abe K."/>
            <person name="Kamihara K."/>
            <person name="Katsuta N."/>
            <person name="Sato K."/>
            <person name="Tanikawa M."/>
            <person name="Yamazaki M."/>
            <person name="Ninomiya K."/>
            <person name="Ishibashi T."/>
            <person name="Yamashita H."/>
            <person name="Murakawa K."/>
            <person name="Fujimori K."/>
            <person name="Tanai H."/>
            <person name="Kimata M."/>
            <person name="Watanabe M."/>
            <person name="Hiraoka S."/>
            <person name="Chiba Y."/>
            <person name="Ishida S."/>
            <person name="Ono Y."/>
            <person name="Takiguchi S."/>
            <person name="Watanabe S."/>
            <person name="Yosida M."/>
            <person name="Hotuta T."/>
            <person name="Kusano J."/>
            <person name="Kanehori K."/>
            <person name="Takahashi-Fujii A."/>
            <person name="Hara H."/>
            <person name="Tanase T.-O."/>
            <person name="Nomura Y."/>
            <person name="Togiya S."/>
            <person name="Komai F."/>
            <person name="Hara R."/>
            <person name="Takeuchi K."/>
            <person name="Arita M."/>
            <person name="Imose N."/>
            <person name="Musashino K."/>
            <person name="Yuuki H."/>
            <person name="Oshima A."/>
            <person name="Sasaki N."/>
            <person name="Aotsuka S."/>
            <person name="Yoshikawa Y."/>
            <person name="Matsunawa H."/>
            <person name="Ichihara T."/>
            <person name="Shiohata N."/>
            <person name="Sano S."/>
            <person name="Moriya S."/>
            <person name="Momiyama H."/>
            <person name="Satoh N."/>
            <person name="Takami S."/>
            <person name="Terashima Y."/>
            <person name="Suzuki O."/>
            <person name="Nakagawa S."/>
            <person name="Senoh A."/>
            <person name="Mizoguchi H."/>
            <person name="Goto Y."/>
            <person name="Shimizu F."/>
            <person name="Wakebe H."/>
            <person name="Hishigaki H."/>
            <person name="Watanabe T."/>
            <person name="Sugiyama A."/>
            <person name="Takemoto M."/>
            <person name="Kawakami B."/>
            <person name="Yamazaki M."/>
            <person name="Watanabe K."/>
            <person name="Kumagai A."/>
            <person name="Itakura S."/>
            <person name="Fukuzumi Y."/>
            <person name="Fujimori Y."/>
            <person name="Komiyama M."/>
            <person name="Tashiro H."/>
            <person name="Tanigami A."/>
            <person name="Fujiwara T."/>
            <person name="Ono T."/>
            <person name="Yamada K."/>
            <person name="Fujii Y."/>
            <person name="Ozaki K."/>
            <person name="Hirao M."/>
            <person name="Ohmori Y."/>
            <person name="Kawabata A."/>
            <person name="Hikiji T."/>
            <person name="Kobatake N."/>
            <person name="Inagaki H."/>
            <person name="Ikema Y."/>
            <person name="Okamoto S."/>
            <person name="Okitani R."/>
            <person name="Kawakami T."/>
            <person name="Noguchi S."/>
            <person name="Itoh T."/>
            <person name="Shigeta K."/>
            <person name="Senba T."/>
            <person name="Matsumura K."/>
            <person name="Nakajima Y."/>
            <person name="Mizuno T."/>
            <person name="Morinaga M."/>
            <person name="Sasaki M."/>
            <person name="Togashi T."/>
            <person name="Oyama M."/>
            <person name="Hata H."/>
            <person name="Watanabe M."/>
            <person name="Komatsu T."/>
            <person name="Mizushima-Sugano J."/>
            <person name="Satoh T."/>
            <person name="Shirai Y."/>
            <person name="Takahashi Y."/>
            <person name="Nakagawa K."/>
            <person name="Okumura K."/>
            <person name="Nagase T."/>
            <person name="Nomura N."/>
            <person name="Kikuchi H."/>
            <person name="Masuho Y."/>
            <person name="Yamashita R."/>
            <person name="Nakai K."/>
            <person name="Yada T."/>
            <person name="Nakamura Y."/>
            <person name="Ohara O."/>
            <person name="Isogai T."/>
            <person name="Sugano S."/>
        </authorList>
    </citation>
    <scope>NUCLEOTIDE SEQUENCE [LARGE SCALE MRNA]</scope>
    <source>
        <tissue>Tongue</tissue>
    </source>
</reference>
<reference key="4">
    <citation type="submission" date="2005-09" db="EMBL/GenBank/DDBJ databases">
        <authorList>
            <person name="Mural R.J."/>
            <person name="Istrail S."/>
            <person name="Sutton G.G."/>
            <person name="Florea L."/>
            <person name="Halpern A.L."/>
            <person name="Mobarry C.M."/>
            <person name="Lippert R."/>
            <person name="Walenz B."/>
            <person name="Shatkay H."/>
            <person name="Dew I."/>
            <person name="Miller J.R."/>
            <person name="Flanigan M.J."/>
            <person name="Edwards N.J."/>
            <person name="Bolanos R."/>
            <person name="Fasulo D."/>
            <person name="Halldorsson B.V."/>
            <person name="Hannenhalli S."/>
            <person name="Turner R."/>
            <person name="Yooseph S."/>
            <person name="Lu F."/>
            <person name="Nusskern D.R."/>
            <person name="Shue B.C."/>
            <person name="Zheng X.H."/>
            <person name="Zhong F."/>
            <person name="Delcher A.L."/>
            <person name="Huson D.H."/>
            <person name="Kravitz S.A."/>
            <person name="Mouchard L."/>
            <person name="Reinert K."/>
            <person name="Remington K.A."/>
            <person name="Clark A.G."/>
            <person name="Waterman M.S."/>
            <person name="Eichler E.E."/>
            <person name="Adams M.D."/>
            <person name="Hunkapiller M.W."/>
            <person name="Myers E.W."/>
            <person name="Venter J.C."/>
        </authorList>
    </citation>
    <scope>NUCLEOTIDE SEQUENCE [LARGE SCALE GENOMIC DNA]</scope>
</reference>
<reference key="5">
    <citation type="journal article" date="2004" name="Genome Res.">
        <title>The status, quality, and expansion of the NIH full-length cDNA project: the Mammalian Gene Collection (MGC).</title>
        <authorList>
            <consortium name="The MGC Project Team"/>
        </authorList>
    </citation>
    <scope>NUCLEOTIDE SEQUENCE [LARGE SCALE MRNA]</scope>
    <source>
        <tissue>Skin</tissue>
    </source>
</reference>
<reference key="6">
    <citation type="journal article" date="2005" name="J. Cell Sci.">
        <title>Secretory carrier membrane proteins interact and regulate trafficking of the organellar (Na+,K+)/H+ exchanger NHE7.</title>
        <authorList>
            <person name="Lin P.J."/>
            <person name="Williams W.P."/>
            <person name="Luu Y."/>
            <person name="Molday R.S."/>
            <person name="Orlowski J."/>
            <person name="Numata M."/>
        </authorList>
    </citation>
    <scope>SUBCELLULAR LOCATION</scope>
    <scope>INTERACTION WITH SLC9A7</scope>
</reference>
<reference key="7">
    <citation type="journal article" date="2006" name="J. Biol. Chem.">
        <title>Subcellular redistribution of the serotonin transporter by secretory carrier membrane protein 2.</title>
        <authorList>
            <person name="Mueller H.K."/>
            <person name="Wiborg O."/>
            <person name="Haase J."/>
        </authorList>
    </citation>
    <scope>INTERACTION WITH SLC6A4</scope>
</reference>
<reference key="8">
    <citation type="journal article" date="2008" name="J. Proteome Res.">
        <title>Phosphoproteome of resting human platelets.</title>
        <authorList>
            <person name="Zahedi R.P."/>
            <person name="Lewandrowski U."/>
            <person name="Wiesner J."/>
            <person name="Wortelkamp S."/>
            <person name="Moebius J."/>
            <person name="Schuetz C."/>
            <person name="Walter U."/>
            <person name="Gambaryan S."/>
            <person name="Sickmann A."/>
        </authorList>
    </citation>
    <scope>IDENTIFICATION BY MASS SPECTROMETRY [LARGE SCALE ANALYSIS]</scope>
    <source>
        <tissue>Platelet</tissue>
    </source>
</reference>
<reference key="9">
    <citation type="journal article" date="2009" name="Anal. Chem.">
        <title>Lys-N and trypsin cover complementary parts of the phosphoproteome in a refined SCX-based approach.</title>
        <authorList>
            <person name="Gauci S."/>
            <person name="Helbig A.O."/>
            <person name="Slijper M."/>
            <person name="Krijgsveld J."/>
            <person name="Heck A.J."/>
            <person name="Mohammed S."/>
        </authorList>
    </citation>
    <scope>IDENTIFICATION BY MASS SPECTROMETRY [LARGE SCALE ANALYSIS]</scope>
</reference>
<reference key="10">
    <citation type="journal article" date="2009" name="J. Biol. Chem.">
        <title>Secretory Carrier Membrane Protein 2 Regulates Cell-surface Targeting of Brain-enriched Na+/H+ Exchanger NHE5.</title>
        <authorList>
            <person name="Diering G.H."/>
            <person name="Church J."/>
            <person name="Numata M."/>
        </authorList>
    </citation>
    <scope>INTERACTION WITH SLC9A5</scope>
</reference>
<reference key="11">
    <citation type="journal article" date="2010" name="Sci. Signal.">
        <title>Quantitative phosphoproteomics reveals widespread full phosphorylation site occupancy during mitosis.</title>
        <authorList>
            <person name="Olsen J.V."/>
            <person name="Vermeulen M."/>
            <person name="Santamaria A."/>
            <person name="Kumar C."/>
            <person name="Miller M.L."/>
            <person name="Jensen L.J."/>
            <person name="Gnad F."/>
            <person name="Cox J."/>
            <person name="Jensen T.S."/>
            <person name="Nigg E.A."/>
            <person name="Brunak S."/>
            <person name="Mann M."/>
        </authorList>
    </citation>
    <scope>PHOSPHORYLATION [LARGE SCALE ANALYSIS] AT SER-319</scope>
    <scope>IDENTIFICATION BY MASS SPECTROMETRY [LARGE SCALE ANALYSIS]</scope>
    <source>
        <tissue>Cervix carcinoma</tissue>
    </source>
</reference>
<reference key="12">
    <citation type="journal article" date="2011" name="BMC Syst. Biol.">
        <title>Initial characterization of the human central proteome.</title>
        <authorList>
            <person name="Burkard T.R."/>
            <person name="Planyavsky M."/>
            <person name="Kaupe I."/>
            <person name="Breitwieser F.P."/>
            <person name="Buerckstuemmer T."/>
            <person name="Bennett K.L."/>
            <person name="Superti-Furga G."/>
            <person name="Colinge J."/>
        </authorList>
    </citation>
    <scope>IDENTIFICATION BY MASS SPECTROMETRY [LARGE SCALE ANALYSIS]</scope>
</reference>
<reference key="13">
    <citation type="journal article" date="2011" name="Sci. Signal.">
        <title>System-wide temporal characterization of the proteome and phosphoproteome of human embryonic stem cell differentiation.</title>
        <authorList>
            <person name="Rigbolt K.T."/>
            <person name="Prokhorova T.A."/>
            <person name="Akimov V."/>
            <person name="Henningsen J."/>
            <person name="Johansen P.T."/>
            <person name="Kratchmarova I."/>
            <person name="Kassem M."/>
            <person name="Mann M."/>
            <person name="Olsen J.V."/>
            <person name="Blagoev B."/>
        </authorList>
    </citation>
    <scope>PHOSPHORYLATION [LARGE SCALE ANALYSIS] AT SER-320</scope>
    <scope>IDENTIFICATION BY MASS SPECTROMETRY [LARGE SCALE ANALYSIS]</scope>
</reference>
<reference key="14">
    <citation type="journal article" date="2013" name="J. Proteome Res.">
        <title>Toward a comprehensive characterization of a human cancer cell phosphoproteome.</title>
        <authorList>
            <person name="Zhou H."/>
            <person name="Di Palma S."/>
            <person name="Preisinger C."/>
            <person name="Peng M."/>
            <person name="Polat A.N."/>
            <person name="Heck A.J."/>
            <person name="Mohammed S."/>
        </authorList>
    </citation>
    <scope>IDENTIFICATION BY MASS SPECTROMETRY [LARGE SCALE ANALYSIS]</scope>
    <source>
        <tissue>Cervix carcinoma</tissue>
        <tissue>Erythroleukemia</tissue>
    </source>
</reference>
<reference key="15">
    <citation type="journal article" date="2014" name="J. Proteomics">
        <title>An enzyme assisted RP-RPLC approach for in-depth analysis of human liver phosphoproteome.</title>
        <authorList>
            <person name="Bian Y."/>
            <person name="Song C."/>
            <person name="Cheng K."/>
            <person name="Dong M."/>
            <person name="Wang F."/>
            <person name="Huang J."/>
            <person name="Sun D."/>
            <person name="Wang L."/>
            <person name="Ye M."/>
            <person name="Zou H."/>
        </authorList>
    </citation>
    <scope>PHOSPHORYLATION [LARGE SCALE ANALYSIS] AT SER-319 AND SER-320</scope>
    <scope>IDENTIFICATION BY MASS SPECTROMETRY [LARGE SCALE ANALYSIS]</scope>
    <source>
        <tissue>Liver</tissue>
    </source>
</reference>
<reference key="16">
    <citation type="journal article" date="2015" name="Proteomics">
        <title>N-terminome analysis of the human mitochondrial proteome.</title>
        <authorList>
            <person name="Vaca Jacome A.S."/>
            <person name="Rabilloud T."/>
            <person name="Schaeffer-Reiss C."/>
            <person name="Rompais M."/>
            <person name="Ayoub D."/>
            <person name="Lane L."/>
            <person name="Bairoch A."/>
            <person name="Van Dorsselaer A."/>
            <person name="Carapito C."/>
        </authorList>
    </citation>
    <scope>IDENTIFICATION BY MASS SPECTROMETRY [LARGE SCALE ANALYSIS]</scope>
</reference>
<proteinExistence type="evidence at protein level"/>
<gene>
    <name type="primary">SCAMP2</name>
</gene>
<feature type="chain" id="PRO_0000191254" description="Secretory carrier-associated membrane protein 2">
    <location>
        <begin position="1"/>
        <end position="329"/>
    </location>
</feature>
<feature type="topological domain" description="Cytoplasmic" evidence="1">
    <location>
        <begin position="1"/>
        <end position="153"/>
    </location>
</feature>
<feature type="transmembrane region" description="Helical" evidence="1">
    <location>
        <begin position="154"/>
        <end position="174"/>
    </location>
</feature>
<feature type="topological domain" description="Lumenal" evidence="1">
    <location>
        <begin position="175"/>
        <end position="181"/>
    </location>
</feature>
<feature type="transmembrane region" description="Helical" evidence="1">
    <location>
        <begin position="182"/>
        <end position="202"/>
    </location>
</feature>
<feature type="topological domain" description="Cytoplasmic" evidence="1">
    <location>
        <begin position="203"/>
        <end position="218"/>
    </location>
</feature>
<feature type="transmembrane region" description="Helical" evidence="1">
    <location>
        <begin position="219"/>
        <end position="239"/>
    </location>
</feature>
<feature type="topological domain" description="Lumenal" evidence="1">
    <location>
        <begin position="240"/>
        <end position="262"/>
    </location>
</feature>
<feature type="transmembrane region" description="Helical" evidence="1">
    <location>
        <begin position="263"/>
        <end position="283"/>
    </location>
</feature>
<feature type="topological domain" description="Cytoplasmic" evidence="1">
    <location>
        <begin position="284"/>
        <end position="329"/>
    </location>
</feature>
<feature type="region of interest" description="Disordered" evidence="2">
    <location>
        <begin position="1"/>
        <end position="21"/>
    </location>
</feature>
<feature type="region of interest" description="Disordered" evidence="2">
    <location>
        <begin position="51"/>
        <end position="72"/>
    </location>
</feature>
<feature type="region of interest" description="Interaction with SLC9A7" evidence="3">
    <location>
        <begin position="203"/>
        <end position="218"/>
    </location>
</feature>
<feature type="modified residue" description="Phosphoserine" evidence="7 9">
    <location>
        <position position="319"/>
    </location>
</feature>
<feature type="modified residue" description="Phosphoserine" evidence="8 9">
    <location>
        <position position="320"/>
    </location>
</feature>
<organism>
    <name type="scientific">Homo sapiens</name>
    <name type="common">Human</name>
    <dbReference type="NCBI Taxonomy" id="9606"/>
    <lineage>
        <taxon>Eukaryota</taxon>
        <taxon>Metazoa</taxon>
        <taxon>Chordata</taxon>
        <taxon>Craniata</taxon>
        <taxon>Vertebrata</taxon>
        <taxon>Euteleostomi</taxon>
        <taxon>Mammalia</taxon>
        <taxon>Eutheria</taxon>
        <taxon>Euarchontoglires</taxon>
        <taxon>Primates</taxon>
        <taxon>Haplorrhini</taxon>
        <taxon>Catarrhini</taxon>
        <taxon>Hominidae</taxon>
        <taxon>Homo</taxon>
    </lineage>
</organism>
<accession>O15127</accession>
<accession>B2RDF0</accession>
<accession>Q9BQE8</accession>
<comment type="function">
    <text>Functions in post-Golgi recycling pathways. Acts as a recycling carrier to the cell surface.</text>
</comment>
<comment type="subunit">
    <text evidence="3 4 5">Interacts with SLC6A4 and SLC9A7 (PubMed:15840657, PubMed:16870614). Interacts with SLC9A5; this interaction regulates SLC9A5 cell-surface targeting and SLC9A5 activity (PubMed:19276089).</text>
</comment>
<comment type="interaction">
    <interactant intactId="EBI-712703">
        <id>O15127</id>
    </interactant>
    <interactant intactId="EBI-9641086">
        <id>P21333-2</id>
        <label>FLNA</label>
    </interactant>
    <organismsDiffer>false</organismsDiffer>
    <experiments>3</experiments>
</comment>
<comment type="interaction">
    <interactant intactId="EBI-712703">
        <id>O15127</id>
    </interactant>
    <interactant intactId="EBI-12266234">
        <id>Q8IVJ1</id>
        <label>SLC41A1</label>
    </interactant>
    <organismsDiffer>false</organismsDiffer>
    <experiments>3</experiments>
</comment>
<comment type="interaction">
    <interactant intactId="EBI-712703">
        <id>O15127</id>
    </interactant>
    <interactant intactId="EBI-4319546">
        <id>Q96T83</id>
        <label>SLC9A7</label>
    </interactant>
    <organismsDiffer>false</organismsDiffer>
    <experiments>9</experiments>
</comment>
<comment type="subcellular location">
    <subcellularLocation>
        <location evidence="3">Golgi apparatus</location>
        <location evidence="3">trans-Golgi network membrane</location>
        <topology evidence="3">Multi-pass membrane protein</topology>
    </subcellularLocation>
    <subcellularLocation>
        <location evidence="3">Recycling endosome membrane</location>
        <topology evidence="3">Multi-pass membrane protein</topology>
    </subcellularLocation>
</comment>
<comment type="tissue specificity">
    <text>Widely expressed.</text>
</comment>
<comment type="similarity">
    <text evidence="6">Belongs to the SCAMP family.</text>
</comment>
<sequence length="329" mass="36649">MSAFDTNPFADPVDVNPFQDPSVTQLTNAPQGGLAEFNPFSETNAATTVPVTQLPGSSQPAVLQPSVEPTQPTPQAVVSAAQAGLLRQQEELDRKAAELERKERELQNTVANLHVRQNNWPPLPSWCPVKPCFYQDFSTEIPADYQRICKMLYYLWMLHSVTLFLNLLACLAWFSGNSSKGVDFGLSILWFLIFTPCAFLCWYRPIYKAFRSDNSFSFFVFFFVFFCQIGIYIIQLVGIPGLGDSGWIAALSTLDNHSLAISVIMMVVAGFFTLCAVLSVFLLQRVHSLYRRTGASFQQAQEEFSQGIFSSRTFHRAASSAAQGAFQGN</sequence>